<keyword id="KW-0963">Cytoplasm</keyword>
<keyword id="KW-0274">FAD</keyword>
<keyword id="KW-0285">Flavoprotein</keyword>
<keyword id="KW-0520">NAD</keyword>
<keyword id="KW-0560">Oxidoreductase</keyword>
<accession>B7M9E8</accession>
<proteinExistence type="inferred from homology"/>
<name>NORW_ECO8A</name>
<sequence>MSNGIVIIGSGFAARQLVKNIRKQDATIPLTLIAADSMDEYNKPDLSHVISQGQRADDLTRQTAGEFAEQFNLHLFPQTWVTDIDAEARVVKSQNNQWQYDKLVLATGASAFVPPVPGRELMLTLNSQQEYRACETQLRDARRVLIVGGGLIGSELAMDFCRAGKAVTLIDNAASILASLMPPEVSSRLQHRLTEMGVHLLLKSQLQGLEKTDSGILATLDRQRSIEVDAVIAATGLRPETALARRAGLTINRGVCVDSYLQTSNADIYALGDCAEINGQVLPFLQPIQLSAMVLAKNLLGNNTPLKLPAMLVKIKTPELPLHLAGETQRQDLRWQINTERQGMVARGVDDADQLRAFVVSEDRMKEAFGLLKTLPM</sequence>
<feature type="chain" id="PRO_1000141170" description="Nitric oxide reductase FlRd-NAD(+) reductase">
    <location>
        <begin position="1"/>
        <end position="377"/>
    </location>
</feature>
<protein>
    <recommendedName>
        <fullName evidence="1">Nitric oxide reductase FlRd-NAD(+) reductase</fullName>
        <ecNumber evidence="1">1.18.1.-</ecNumber>
    </recommendedName>
    <alternativeName>
        <fullName evidence="1">Flavorubredoxin reductase</fullName>
        <shortName evidence="1">FlRd-reductase</shortName>
        <shortName evidence="1">FlavoRb reductase</shortName>
    </alternativeName>
</protein>
<reference key="1">
    <citation type="journal article" date="2009" name="PLoS Genet.">
        <title>Organised genome dynamics in the Escherichia coli species results in highly diverse adaptive paths.</title>
        <authorList>
            <person name="Touchon M."/>
            <person name="Hoede C."/>
            <person name="Tenaillon O."/>
            <person name="Barbe V."/>
            <person name="Baeriswyl S."/>
            <person name="Bidet P."/>
            <person name="Bingen E."/>
            <person name="Bonacorsi S."/>
            <person name="Bouchier C."/>
            <person name="Bouvet O."/>
            <person name="Calteau A."/>
            <person name="Chiapello H."/>
            <person name="Clermont O."/>
            <person name="Cruveiller S."/>
            <person name="Danchin A."/>
            <person name="Diard M."/>
            <person name="Dossat C."/>
            <person name="Karoui M.E."/>
            <person name="Frapy E."/>
            <person name="Garry L."/>
            <person name="Ghigo J.M."/>
            <person name="Gilles A.M."/>
            <person name="Johnson J."/>
            <person name="Le Bouguenec C."/>
            <person name="Lescat M."/>
            <person name="Mangenot S."/>
            <person name="Martinez-Jehanne V."/>
            <person name="Matic I."/>
            <person name="Nassif X."/>
            <person name="Oztas S."/>
            <person name="Petit M.A."/>
            <person name="Pichon C."/>
            <person name="Rouy Z."/>
            <person name="Ruf C.S."/>
            <person name="Schneider D."/>
            <person name="Tourret J."/>
            <person name="Vacherie B."/>
            <person name="Vallenet D."/>
            <person name="Medigue C."/>
            <person name="Rocha E.P.C."/>
            <person name="Denamur E."/>
        </authorList>
    </citation>
    <scope>NUCLEOTIDE SEQUENCE [LARGE SCALE GENOMIC DNA]</scope>
    <source>
        <strain>IAI1</strain>
    </source>
</reference>
<organism>
    <name type="scientific">Escherichia coli O8 (strain IAI1)</name>
    <dbReference type="NCBI Taxonomy" id="585034"/>
    <lineage>
        <taxon>Bacteria</taxon>
        <taxon>Pseudomonadati</taxon>
        <taxon>Pseudomonadota</taxon>
        <taxon>Gammaproteobacteria</taxon>
        <taxon>Enterobacterales</taxon>
        <taxon>Enterobacteriaceae</taxon>
        <taxon>Escherichia</taxon>
    </lineage>
</organism>
<evidence type="ECO:0000255" key="1">
    <source>
        <dbReference type="HAMAP-Rule" id="MF_01313"/>
    </source>
</evidence>
<dbReference type="EC" id="1.18.1.-" evidence="1"/>
<dbReference type="EMBL" id="CU928160">
    <property type="protein sequence ID" value="CAQ99628.1"/>
    <property type="molecule type" value="Genomic_DNA"/>
</dbReference>
<dbReference type="RefSeq" id="WP_000064748.1">
    <property type="nucleotide sequence ID" value="NC_011741.1"/>
</dbReference>
<dbReference type="SMR" id="B7M9E8"/>
<dbReference type="KEGG" id="ecr:ECIAI1_2803"/>
<dbReference type="HOGENOM" id="CLU_003291_4_4_6"/>
<dbReference type="UniPathway" id="UPA00638"/>
<dbReference type="GO" id="GO:0005737">
    <property type="term" value="C:cytoplasm"/>
    <property type="evidence" value="ECO:0007669"/>
    <property type="project" value="UniProtKB-SubCell"/>
</dbReference>
<dbReference type="GO" id="GO:0016731">
    <property type="term" value="F:oxidoreductase activity, acting on iron-sulfur proteins as donors, NAD or NADP as acceptor"/>
    <property type="evidence" value="ECO:0007669"/>
    <property type="project" value="UniProtKB-UniRule"/>
</dbReference>
<dbReference type="FunFam" id="3.30.390.120:FF:000001">
    <property type="entry name" value="Nitric oxide reductase FlRd-NAD(+) reductase"/>
    <property type="match status" value="1"/>
</dbReference>
<dbReference type="FunFam" id="3.50.50.60:FF:000075">
    <property type="entry name" value="Nitric oxide reductase FlRd-NAD(+) reductase"/>
    <property type="match status" value="1"/>
</dbReference>
<dbReference type="Gene3D" id="3.30.390.120">
    <property type="match status" value="1"/>
</dbReference>
<dbReference type="Gene3D" id="3.50.50.60">
    <property type="entry name" value="FAD/NAD(P)-binding domain"/>
    <property type="match status" value="2"/>
</dbReference>
<dbReference type="HAMAP" id="MF_01313">
    <property type="entry name" value="NorW"/>
    <property type="match status" value="1"/>
</dbReference>
<dbReference type="InterPro" id="IPR050260">
    <property type="entry name" value="FAD-bd_OxRdtase"/>
</dbReference>
<dbReference type="InterPro" id="IPR036188">
    <property type="entry name" value="FAD/NAD-bd_sf"/>
</dbReference>
<dbReference type="InterPro" id="IPR023753">
    <property type="entry name" value="FAD/NAD-binding_dom"/>
</dbReference>
<dbReference type="InterPro" id="IPR023961">
    <property type="entry name" value="NO_rdtase_NorW"/>
</dbReference>
<dbReference type="InterPro" id="IPR041364">
    <property type="entry name" value="Rbx-bd"/>
</dbReference>
<dbReference type="NCBIfam" id="NF003437">
    <property type="entry name" value="PRK04965.1"/>
    <property type="match status" value="1"/>
</dbReference>
<dbReference type="PANTHER" id="PTHR43429:SF3">
    <property type="entry name" value="NITRITE REDUCTASE [NAD(P)H]"/>
    <property type="match status" value="1"/>
</dbReference>
<dbReference type="PANTHER" id="PTHR43429">
    <property type="entry name" value="PYRIDINE NUCLEOTIDE-DISULFIDE OXIDOREDUCTASE DOMAIN-CONTAINING"/>
    <property type="match status" value="1"/>
</dbReference>
<dbReference type="Pfam" id="PF07992">
    <property type="entry name" value="Pyr_redox_2"/>
    <property type="match status" value="1"/>
</dbReference>
<dbReference type="Pfam" id="PF18113">
    <property type="entry name" value="Rbx_binding"/>
    <property type="match status" value="1"/>
</dbReference>
<dbReference type="PRINTS" id="PR00368">
    <property type="entry name" value="FADPNR"/>
</dbReference>
<dbReference type="PRINTS" id="PR00411">
    <property type="entry name" value="PNDRDTASEI"/>
</dbReference>
<dbReference type="SUPFAM" id="SSF51905">
    <property type="entry name" value="FAD/NAD(P)-binding domain"/>
    <property type="match status" value="1"/>
</dbReference>
<comment type="function">
    <text evidence="1">One of at least two accessory proteins for anaerobic nitric oxide (NO) reductase. Reduces the rubredoxin moiety of NO reductase.</text>
</comment>
<comment type="catalytic activity">
    <reaction evidence="1">
        <text>2 reduced [nitric oxide reductase rubredoxin domain] + NAD(+) + H(+) = 2 oxidized [nitric oxide reductase rubredoxin domain] + NADH</text>
        <dbReference type="Rhea" id="RHEA:42960"/>
        <dbReference type="Rhea" id="RHEA-COMP:10304"/>
        <dbReference type="Rhea" id="RHEA-COMP:10305"/>
        <dbReference type="ChEBI" id="CHEBI:15378"/>
        <dbReference type="ChEBI" id="CHEBI:29033"/>
        <dbReference type="ChEBI" id="CHEBI:29034"/>
        <dbReference type="ChEBI" id="CHEBI:57540"/>
        <dbReference type="ChEBI" id="CHEBI:57945"/>
    </reaction>
</comment>
<comment type="cofactor">
    <cofactor evidence="1">
        <name>FAD</name>
        <dbReference type="ChEBI" id="CHEBI:57692"/>
    </cofactor>
</comment>
<comment type="pathway">
    <text evidence="1">Nitrogen metabolism; nitric oxide reduction.</text>
</comment>
<comment type="subcellular location">
    <subcellularLocation>
        <location evidence="1">Cytoplasm</location>
    </subcellularLocation>
</comment>
<comment type="similarity">
    <text evidence="1">Belongs to the FAD-dependent oxidoreductase family.</text>
</comment>
<gene>
    <name evidence="1" type="primary">norW</name>
    <name evidence="1" type="synonym">flrR</name>
    <name type="ordered locus">ECIAI1_2803</name>
</gene>